<feature type="chain" id="PRO_0000053619" description="Estrogen receptor">
    <location>
        <begin position="1" status="less than"/>
        <end position="121" status="greater than"/>
    </location>
</feature>
<feature type="domain" description="NR LBD" evidence="6">
    <location>
        <begin position="1" status="less than"/>
        <end position="121" status="greater than"/>
    </location>
</feature>
<feature type="lipid moiety-binding region" description="S-palmitoyl cysteine" evidence="1">
    <location>
        <position position="45"/>
    </location>
</feature>
<feature type="non-terminal residue">
    <location>
        <position position="1"/>
    </location>
</feature>
<feature type="non-terminal residue">
    <location>
        <position position="121"/>
    </location>
</feature>
<evidence type="ECO:0000250" key="1"/>
<evidence type="ECO:0000250" key="2">
    <source>
        <dbReference type="UniProtKB" id="P03372"/>
    </source>
</evidence>
<evidence type="ECO:0000250" key="3">
    <source>
        <dbReference type="UniProtKB" id="P06211"/>
    </source>
</evidence>
<evidence type="ECO:0000250" key="4">
    <source>
        <dbReference type="UniProtKB" id="P19785"/>
    </source>
</evidence>
<evidence type="ECO:0000255" key="5">
    <source>
        <dbReference type="PROSITE-ProRule" id="PRU00407"/>
    </source>
</evidence>
<evidence type="ECO:0000255" key="6">
    <source>
        <dbReference type="PROSITE-ProRule" id="PRU01189"/>
    </source>
</evidence>
<evidence type="ECO:0000305" key="7"/>
<accession>P49886</accession>
<comment type="function">
    <text evidence="1 3">Nuclear hormone receptor. The steroid hormones and their receptors are involved in the regulation of eukaryotic gene expression and affect cellular proliferation and differentiation in target tissues. Ligand-dependent nuclear transactivation involves either direct homodimer binding to a palindromic estrogen response element (ERE) sequence or association with other DNA-binding transcription factors, such as AP-1/c-Jun, c-Fos, ATF-2, Sp1 and Sp3, to mediate ERE-independent signaling. Ligand binding induces a conformational change allowing subsequent or combinatorial association with multiprotein coactivator complexes through LXXLL motifs of their respective components. Mutual transrepression occurs between the estrogen receptor (ER) and NF-kappa-B in a cell-type specific manner. Decreases NF-kappa-B DNA-binding activity and inhibits NF-kappa-B-mediated transcription from the IL6 promoter and displace RELA/p65 and associated coregulators from the promoter. Recruited to the NF-kappa-B response element of the CCL2 and IL8 promoters and can displace CREBBP. Present with NF-kappa-B components RELA/p65 and NFKB1/p50 on ERE sequences. Can also act synergistically with NF-kappa-B to activate transcription involving respective recruitment adjacent response elements; the function involves CREBBP. Can activate the transcriptional activity of TFF1. Also mediates membrane-initiated estrogen signaling involving various kinase cascades. Essential for MTA1-mediated transcriptional regulation of BRCA1 and BCAS3 (By similarity). Maintains neuronal survival in response to ischemic reperfusion injury when in the presence of circulating estradiol (17-beta-estradiol/E2) (By similarity).</text>
</comment>
<comment type="subunit">
    <text evidence="2 3 4">Binds DNA as a homodimer. Can form a heterodimer with ESR2. Interacts with coactivator NCOA5. Interacts with NCOA7; the interaction is ligand-inducible. Interacts with AKAP13, CUEDC2, HEXIM1, KDM5A, MAP1S, PELP1, SMARD1, and UBE1C. Interacts with MUC1; the interaction is stimulated by 7 beta-estradiol (E2) and enhances ERS1-mediated transcription. Interacts with DNTTIP2, and UIMC1. Interacts with KMT2D/MLL2. Interacts with ATAD2; the interaction is enhanced by estradiol. Interacts with KIF18A and LDB1. Interacts with RLIM (via its C-terminus). Interacts with MACROD1. Interacts with SH2D4A and PLCG. Interacts with SH2D4A; the interaction blocks binding to PLCG and inhibits estrogen-induced cell proliferation. Interacts with DYNLL1. Interacts with CCDC62; the interaction requires estradiol and appears to enhance the transcription of target genes. Interacts with NR2C1; the interaction prevents homodimerization of ESR1 and suppresses its transcriptional activity and cell growth. Interacts with DNAAF4. Interacts with PRMT2. Interacts with PI3KR1 or PIK3R2, SRC and PTK2/FAK1. Interacts with RBFOX2. Interacts with EP300; the interaction is estrogen-dependent and enhanced by CITED1. Interacts with CITED1; the interaction is estrogen-dependent. Interacts with FAM120B, FOXL2, PHB2 and SLC30A9. Interacts with coactivators NCOA3 and NCOA6. Interacts with STK3/MST2 only in the presence of SAV1 and vice-versa. Binds to CSNK1D. Interacts with NCOA2; NCOA2 can interact with ESR1 AF-1 and AF-2 domains simultaneously and mediate their transcriptional synergy. Interacts with DDX5. Interacts with NCOA1; the interaction seems to require a self-association of N-terminal and C-terminal regions. Interacts with ZNF366, DDX17, NFKB1, RELA, SP1 and SP3. Interacts with NRIP1. Interacts with GPER1; the interaction occurs in an estrogen-dependent manner. Interacts with CLOCK and the interaction is stimulated by estrogen. Interacts with TRIP4 (ufmylated); estrogen dependent. Interacts with LMTK3; the interaction phosphorylates ESR1 (in vitro) and protects it against proteasomal degradation. Interacts with CCAR2 (via N-terminus) in a ligand-independent manner. Interacts with ZFHX3. Interacts with SFR1 in a ligand-dependent and -independent manner. Interacts with DCAF13, LATS1 and DCAF1; regulates ESR1 ubiquitination and ubiquitin-mediated proteasomal degradation. Interacts (via DNA-binding domain) with POU4F2 (C-terminus); this interaction increases the estrogen receptor ESR1 transcriptional activity in a DNA- and ligand 17-beta-estradiol-independent manner. Interacts with ESRRB isoform 1. Interacts with UBE3A and WBP2. Interacts with GTF2B. Interacts with RBM39. In the absence of hormonal ligand, interacts with TACC1 (By similarity). Interacts with BAG1; the interaction is promoted in the absence of estradiol (17-beta-estradiol/E2) (By similarity). Interacts with and ubiquitinated by STUB1; the interaction is promoted in the absence of estradiol (17-beta-estradiol/E2) (By similarity). Interacts with NEDD8 (By similarity).</text>
</comment>
<comment type="subcellular location">
    <subcellularLocation>
        <location evidence="5">Nucleus</location>
    </subcellularLocation>
    <subcellularLocation>
        <location evidence="1">Cytoplasm</location>
    </subcellularLocation>
    <subcellularLocation>
        <location evidence="1">Golgi apparatus</location>
    </subcellularLocation>
    <subcellularLocation>
        <location evidence="1">Cell membrane</location>
    </subcellularLocation>
    <text evidence="1">Colocalizes with ZDHHC7 and ZDHHC21 in the Golgi apparatus where most probably palmitoylation occurs. Associated with the plasma membrane when palmitoylated.</text>
</comment>
<comment type="domain">
    <text evidence="1">Composed of three domains: a modulating N-terminal domain, a DNA-binding domain and a C-terminal ligand-binding domain. The modulating domain, also known as A/B or AF-1 domain has a ligand-independent transactivation function. The C-terminus contains a ligand-dependent transactivation domain, also known as E/F or AF-2 domain which overlaps with the ligand binding domain. AF-1 and AF-2 activate transcription independently and synergistically and act in a promoter- and cell-specific manner (By similarity).</text>
</comment>
<comment type="PTM">
    <text evidence="2 3">Ubiquitinated; regulated by LATS1 via DCAF1 it leads to ESR1 proteasomal degradation. Deubiquitinated by OTUB1 (By similarity). Ubiquitinated by STUB1/CHIP; in the CA1 hippocampal region following loss of endogenous circulating estradiol (17-beta-estradiol/E2) (By similarity). Ubiquitinated by UBR5, leading to its degradation: UBR5 specifically recognizes and binds ligand-bound ESR1 when it is not associated with coactivators (NCOAs). In presence of NCOAs, the UBR5-degron is not accessible, preventing its ubiquitination and degradation (By similarity).</text>
</comment>
<comment type="PTM">
    <text evidence="1">Palmitoylated at Cys-45 by ZDHHC7 and ZDHHC21. Palmitoylation is required for plasma membrane targeting and for rapid intracellular signaling via ERK and AKT kinases and cAMP generation, but not for signaling mediated by the nuclear hormone receptor (By similarity).</text>
</comment>
<comment type="PTM">
    <text evidence="2">Phosphorylated by cyclin A/CDK2 and CK1. Phosphorylation probably enhances transcriptional activity. Dephosphorylation by PPP5C inhibits its transactivation activity (By similarity). Phosphorylated by LMTK3 (in vitro) (By similarity).</text>
</comment>
<comment type="PTM">
    <text evidence="2">Dimethylated by PRMT1. Demethylated by JMJD6.</text>
</comment>
<comment type="similarity">
    <text evidence="7">Belongs to the nuclear hormone receptor family. NR3 subfamily.</text>
</comment>
<keyword id="KW-0010">Activator</keyword>
<keyword id="KW-1003">Cell membrane</keyword>
<keyword id="KW-0963">Cytoplasm</keyword>
<keyword id="KW-0238">DNA-binding</keyword>
<keyword id="KW-0333">Golgi apparatus</keyword>
<keyword id="KW-0446">Lipid-binding</keyword>
<keyword id="KW-0449">Lipoprotein</keyword>
<keyword id="KW-0472">Membrane</keyword>
<keyword id="KW-0479">Metal-binding</keyword>
<keyword id="KW-0539">Nucleus</keyword>
<keyword id="KW-0564">Palmitate</keyword>
<keyword id="KW-0675">Receptor</keyword>
<keyword id="KW-1185">Reference proteome</keyword>
<keyword id="KW-0754">Steroid-binding</keyword>
<keyword id="KW-0804">Transcription</keyword>
<keyword id="KW-0805">Transcription regulation</keyword>
<keyword id="KW-0832">Ubl conjugation</keyword>
<keyword id="KW-0862">Zinc</keyword>
<keyword id="KW-0863">Zinc-finger</keyword>
<sequence length="121" mass="13836">LFAPNLLLDRNQGKCVEGMVESFDMLLATSSRFRMMNLQGEEFVCLKSIILLNSGVYTFLSSTLKSLEEKDHIHRVLDKITDTLIHLMAKAGLTLQQQHRRLAQLLLILSHIRHMSNKGME</sequence>
<dbReference type="EMBL" id="S71040">
    <property type="protein sequence ID" value="AAB31102.1"/>
    <property type="molecule type" value="mRNA"/>
</dbReference>
<dbReference type="PIR" id="I67419">
    <property type="entry name" value="I67419"/>
</dbReference>
<dbReference type="SMR" id="P49886"/>
<dbReference type="STRING" id="9544.ENSMMUP00000069490"/>
<dbReference type="PaxDb" id="9544-ENSMMUP00000025044"/>
<dbReference type="eggNOG" id="KOG3575">
    <property type="taxonomic scope" value="Eukaryota"/>
</dbReference>
<dbReference type="InParanoid" id="P49886"/>
<dbReference type="Proteomes" id="UP000006718">
    <property type="component" value="Unassembled WGS sequence"/>
</dbReference>
<dbReference type="GO" id="GO:0005794">
    <property type="term" value="C:Golgi apparatus"/>
    <property type="evidence" value="ECO:0007669"/>
    <property type="project" value="UniProtKB-SubCell"/>
</dbReference>
<dbReference type="GO" id="GO:0005654">
    <property type="term" value="C:nucleoplasm"/>
    <property type="evidence" value="ECO:0007669"/>
    <property type="project" value="UniProtKB-ARBA"/>
</dbReference>
<dbReference type="GO" id="GO:0005634">
    <property type="term" value="C:nucleus"/>
    <property type="evidence" value="ECO:0000250"/>
    <property type="project" value="UniProtKB"/>
</dbReference>
<dbReference type="GO" id="GO:0005886">
    <property type="term" value="C:plasma membrane"/>
    <property type="evidence" value="ECO:0007669"/>
    <property type="project" value="UniProtKB-SubCell"/>
</dbReference>
<dbReference type="GO" id="GO:0043565">
    <property type="term" value="F:sequence-specific DNA binding"/>
    <property type="evidence" value="ECO:0000250"/>
    <property type="project" value="UniProtKB"/>
</dbReference>
<dbReference type="GO" id="GO:0005496">
    <property type="term" value="F:steroid binding"/>
    <property type="evidence" value="ECO:0000250"/>
    <property type="project" value="UniProtKB"/>
</dbReference>
<dbReference type="GO" id="GO:0008270">
    <property type="term" value="F:zinc ion binding"/>
    <property type="evidence" value="ECO:0007669"/>
    <property type="project" value="UniProtKB-KW"/>
</dbReference>
<dbReference type="GO" id="GO:0071392">
    <property type="term" value="P:cellular response to estradiol stimulus"/>
    <property type="evidence" value="ECO:0000250"/>
    <property type="project" value="UniProtKB"/>
</dbReference>
<dbReference type="GO" id="GO:0043124">
    <property type="term" value="P:negative regulation of canonical NF-kappaB signal transduction"/>
    <property type="evidence" value="ECO:0000250"/>
    <property type="project" value="UniProtKB"/>
</dbReference>
<dbReference type="GO" id="GO:0043433">
    <property type="term" value="P:negative regulation of DNA-binding transcription factor activity"/>
    <property type="evidence" value="ECO:0000250"/>
    <property type="project" value="UniProtKB"/>
</dbReference>
<dbReference type="GO" id="GO:0034392">
    <property type="term" value="P:negative regulation of smooth muscle cell apoptotic process"/>
    <property type="evidence" value="ECO:0000250"/>
    <property type="project" value="UniProtKB"/>
</dbReference>
<dbReference type="GO" id="GO:0030518">
    <property type="term" value="P:nuclear receptor-mediated steroid hormone signaling pathway"/>
    <property type="evidence" value="ECO:0000250"/>
    <property type="project" value="UniProtKB"/>
</dbReference>
<dbReference type="GO" id="GO:0007200">
    <property type="term" value="P:phospholipase C-activating G protein-coupled receptor signaling pathway"/>
    <property type="evidence" value="ECO:0000250"/>
    <property type="project" value="UniProtKB"/>
</dbReference>
<dbReference type="GO" id="GO:0007204">
    <property type="term" value="P:positive regulation of cytosolic calcium ion concentration"/>
    <property type="evidence" value="ECO:0000250"/>
    <property type="project" value="UniProtKB"/>
</dbReference>
<dbReference type="GO" id="GO:0051091">
    <property type="term" value="P:positive regulation of DNA-binding transcription factor activity"/>
    <property type="evidence" value="ECO:0000250"/>
    <property type="project" value="UniProtKB"/>
</dbReference>
<dbReference type="GO" id="GO:0045893">
    <property type="term" value="P:positive regulation of DNA-templated transcription"/>
    <property type="evidence" value="ECO:0000250"/>
    <property type="project" value="UniProtKB"/>
</dbReference>
<dbReference type="GO" id="GO:0045429">
    <property type="term" value="P:positive regulation of nitric oxide biosynthetic process"/>
    <property type="evidence" value="ECO:0000250"/>
    <property type="project" value="UniProtKB"/>
</dbReference>
<dbReference type="GO" id="GO:0051000">
    <property type="term" value="P:positive regulation of nitric-oxide synthase activity"/>
    <property type="evidence" value="ECO:0000250"/>
    <property type="project" value="UniProtKB"/>
</dbReference>
<dbReference type="Gene3D" id="1.10.565.10">
    <property type="entry name" value="Retinoid X Receptor"/>
    <property type="match status" value="1"/>
</dbReference>
<dbReference type="InterPro" id="IPR035500">
    <property type="entry name" value="NHR-like_dom_sf"/>
</dbReference>
<dbReference type="InterPro" id="IPR000536">
    <property type="entry name" value="Nucl_hrmn_rcpt_lig-bd"/>
</dbReference>
<dbReference type="InterPro" id="IPR050200">
    <property type="entry name" value="Nuclear_hormone_rcpt_NR3"/>
</dbReference>
<dbReference type="InterPro" id="IPR001723">
    <property type="entry name" value="Nuclear_hrmn_rcpt"/>
</dbReference>
<dbReference type="PANTHER" id="PTHR48092">
    <property type="entry name" value="KNIRPS-RELATED PROTEIN-RELATED"/>
    <property type="match status" value="1"/>
</dbReference>
<dbReference type="Pfam" id="PF00104">
    <property type="entry name" value="Hormone_recep"/>
    <property type="match status" value="1"/>
</dbReference>
<dbReference type="PRINTS" id="PR00398">
    <property type="entry name" value="STRDHORMONER"/>
</dbReference>
<dbReference type="SUPFAM" id="SSF48508">
    <property type="entry name" value="Nuclear receptor ligand-binding domain"/>
    <property type="match status" value="1"/>
</dbReference>
<dbReference type="PROSITE" id="PS51843">
    <property type="entry name" value="NR_LBD"/>
    <property type="match status" value="1"/>
</dbReference>
<proteinExistence type="evidence at transcript level"/>
<gene>
    <name type="primary">ESR1</name>
    <name type="synonym">ESR</name>
    <name type="synonym">NR3A1</name>
</gene>
<protein>
    <recommendedName>
        <fullName>Estrogen receptor</fullName>
        <shortName>ER</shortName>
    </recommendedName>
    <alternativeName>
        <fullName>ER-alpha</fullName>
    </alternativeName>
    <alternativeName>
        <fullName>Estradiol receptor</fullName>
    </alternativeName>
    <alternativeName>
        <fullName>Nuclear receptor subfamily 3 group A member 1</fullName>
    </alternativeName>
</protein>
<reference key="1">
    <citation type="journal article" date="1994" name="Endocrinology">
        <title>Progesterone receptor, but not estradiol receptor, messenger ribonucleic acid is expressed in luteinizing granulosa cells and the corpus luteum in rhesus monkeys.</title>
        <authorList>
            <person name="Chandrasekher Y.A."/>
            <person name="Melner M.H."/>
            <person name="Nagalla S.R."/>
            <person name="Stouffer R.L."/>
        </authorList>
    </citation>
    <scope>NUCLEOTIDE SEQUENCE [MRNA]</scope>
    <source>
        <tissue>Ovary</tissue>
    </source>
</reference>
<organism>
    <name type="scientific">Macaca mulatta</name>
    <name type="common">Rhesus macaque</name>
    <dbReference type="NCBI Taxonomy" id="9544"/>
    <lineage>
        <taxon>Eukaryota</taxon>
        <taxon>Metazoa</taxon>
        <taxon>Chordata</taxon>
        <taxon>Craniata</taxon>
        <taxon>Vertebrata</taxon>
        <taxon>Euteleostomi</taxon>
        <taxon>Mammalia</taxon>
        <taxon>Eutheria</taxon>
        <taxon>Euarchontoglires</taxon>
        <taxon>Primates</taxon>
        <taxon>Haplorrhini</taxon>
        <taxon>Catarrhini</taxon>
        <taxon>Cercopithecidae</taxon>
        <taxon>Cercopithecinae</taxon>
        <taxon>Macaca</taxon>
    </lineage>
</organism>
<name>ESR1_MACMU</name>